<evidence type="ECO:0000255" key="1"/>
<evidence type="ECO:0000305" key="2"/>
<evidence type="ECO:0000305" key="3">
    <source>
    </source>
</evidence>
<sequence length="170" mass="17732">MFLTSPFESCIVLSSLIAGLLFSLSTGFVGILGVFASLFETELSVSPKRLSLSSLSWPKTFWALLSSVEGVSWESSLFACIVGCCFAVTVIASLSASRVFGTVASSFRDSSCCCDSSPAVSVLATPATAALALLSLLLSLPCWSTSTEAFTVDPSPSVFSMLANRITIGL</sequence>
<comment type="subcellular location">
    <subcellularLocation>
        <location>Membrane</location>
        <topology>Multi-pass membrane protein</topology>
    </subcellularLocation>
</comment>
<comment type="miscellaneous">
    <text evidence="2">Partially overlaps SWI3.</text>
</comment>
<comment type="caution">
    <text evidence="3">Product of a dubious gene prediction unlikely to encode a functional protein. Because of that it is not part of the S.cerevisiae S288c complete/reference proteome set.</text>
</comment>
<gene>
    <name type="ordered locus">YJL175W</name>
    <name type="ORF">J0502</name>
</gene>
<name>YJR5_YEAST</name>
<organism>
    <name type="scientific">Saccharomyces cerevisiae (strain ATCC 204508 / S288c)</name>
    <name type="common">Baker's yeast</name>
    <dbReference type="NCBI Taxonomy" id="559292"/>
    <lineage>
        <taxon>Eukaryota</taxon>
        <taxon>Fungi</taxon>
        <taxon>Dikarya</taxon>
        <taxon>Ascomycota</taxon>
        <taxon>Saccharomycotina</taxon>
        <taxon>Saccharomycetes</taxon>
        <taxon>Saccharomycetales</taxon>
        <taxon>Saccharomycetaceae</taxon>
        <taxon>Saccharomyces</taxon>
    </lineage>
</organism>
<dbReference type="EMBL" id="Z49451">
    <property type="protein sequence ID" value="CAA89471.1"/>
    <property type="molecule type" value="Genomic_DNA"/>
</dbReference>
<dbReference type="PIR" id="S56958">
    <property type="entry name" value="S56958"/>
</dbReference>
<dbReference type="SMR" id="P46991"/>
<dbReference type="DIP" id="DIP-5154N"/>
<dbReference type="IntAct" id="P46991">
    <property type="interactions" value="1"/>
</dbReference>
<dbReference type="STRING" id="4932.YJL175W"/>
<dbReference type="PaxDb" id="4932-YJL175W"/>
<dbReference type="EnsemblFungi" id="YJL175W_mRNA">
    <property type="protein sequence ID" value="YJL175W"/>
    <property type="gene ID" value="YJL175W"/>
</dbReference>
<dbReference type="AGR" id="SGD:S000003711"/>
<dbReference type="SGD" id="S000003711">
    <property type="gene designation" value="YJL175W"/>
</dbReference>
<dbReference type="HOGENOM" id="CLU_1571841_0_0_1"/>
<dbReference type="GO" id="GO:0016020">
    <property type="term" value="C:membrane"/>
    <property type="evidence" value="ECO:0007669"/>
    <property type="project" value="UniProtKB-SubCell"/>
</dbReference>
<reference key="1">
    <citation type="journal article" date="1996" name="EMBO J.">
        <title>Complete nucleotide sequence of Saccharomyces cerevisiae chromosome X.</title>
        <authorList>
            <person name="Galibert F."/>
            <person name="Alexandraki D."/>
            <person name="Baur A."/>
            <person name="Boles E."/>
            <person name="Chalwatzis N."/>
            <person name="Chuat J.-C."/>
            <person name="Coster F."/>
            <person name="Cziepluch C."/>
            <person name="de Haan M."/>
            <person name="Domdey H."/>
            <person name="Durand P."/>
            <person name="Entian K.-D."/>
            <person name="Gatius M."/>
            <person name="Goffeau A."/>
            <person name="Grivell L.A."/>
            <person name="Hennemann A."/>
            <person name="Herbert C.J."/>
            <person name="Heumann K."/>
            <person name="Hilger F."/>
            <person name="Hollenberg C.P."/>
            <person name="Huang M.-E."/>
            <person name="Jacq C."/>
            <person name="Jauniaux J.-C."/>
            <person name="Katsoulou C."/>
            <person name="Kirchrath L."/>
            <person name="Kleine K."/>
            <person name="Kordes E."/>
            <person name="Koetter P."/>
            <person name="Liebl S."/>
            <person name="Louis E.J."/>
            <person name="Manus V."/>
            <person name="Mewes H.-W."/>
            <person name="Miosga T."/>
            <person name="Obermaier B."/>
            <person name="Perea J."/>
            <person name="Pohl T.M."/>
            <person name="Portetelle D."/>
            <person name="Pujol A."/>
            <person name="Purnelle B."/>
            <person name="Ramezani Rad M."/>
            <person name="Rasmussen S.W."/>
            <person name="Rose M."/>
            <person name="Rossau R."/>
            <person name="Schaaff-Gerstenschlaeger I."/>
            <person name="Smits P.H.M."/>
            <person name="Scarcez T."/>
            <person name="Soriano N."/>
            <person name="To Van D."/>
            <person name="Tzermia M."/>
            <person name="Van Broekhoven A."/>
            <person name="Vandenbol M."/>
            <person name="Wedler H."/>
            <person name="von Wettstein D."/>
            <person name="Wambutt R."/>
            <person name="Zagulski M."/>
            <person name="Zollner A."/>
            <person name="Karpfinger-Hartl L."/>
        </authorList>
    </citation>
    <scope>NUCLEOTIDE SEQUENCE [LARGE SCALE GENOMIC DNA]</scope>
    <source>
        <strain>ATCC 204508 / S288c</strain>
    </source>
</reference>
<reference key="2">
    <citation type="journal article" date="2014" name="G3 (Bethesda)">
        <title>The reference genome sequence of Saccharomyces cerevisiae: Then and now.</title>
        <authorList>
            <person name="Engel S.R."/>
            <person name="Dietrich F.S."/>
            <person name="Fisk D.G."/>
            <person name="Binkley G."/>
            <person name="Balakrishnan R."/>
            <person name="Costanzo M.C."/>
            <person name="Dwight S.S."/>
            <person name="Hitz B.C."/>
            <person name="Karra K."/>
            <person name="Nash R.S."/>
            <person name="Weng S."/>
            <person name="Wong E.D."/>
            <person name="Lloyd P."/>
            <person name="Skrzypek M.S."/>
            <person name="Miyasato S.R."/>
            <person name="Simison M."/>
            <person name="Cherry J.M."/>
        </authorList>
    </citation>
    <scope>GENOME REANNOTATION</scope>
    <source>
        <strain>ATCC 204508 / S288c</strain>
    </source>
</reference>
<reference key="3">
    <citation type="journal article" date="2006" name="Proc. Natl. Acad. Sci. U.S.A.">
        <title>A global topology map of the Saccharomyces cerevisiae membrane proteome.</title>
        <authorList>
            <person name="Kim H."/>
            <person name="Melen K."/>
            <person name="Oesterberg M."/>
            <person name="von Heijne G."/>
        </authorList>
    </citation>
    <scope>TOPOLOGY [LARGE SCALE ANALYSIS]</scope>
    <source>
        <strain>ATCC 208353 / W303-1A</strain>
    </source>
</reference>
<protein>
    <recommendedName>
        <fullName>Putative uncharacterized membrane protein YJL175W</fullName>
    </recommendedName>
</protein>
<proteinExistence type="uncertain"/>
<feature type="chain" id="PRO_0000203024" description="Putative uncharacterized membrane protein YJL175W">
    <location>
        <begin position="1"/>
        <end position="170"/>
    </location>
</feature>
<feature type="topological domain" description="Cytoplasmic" evidence="1">
    <location>
        <begin position="1"/>
        <end position="15"/>
    </location>
</feature>
<feature type="transmembrane region" description="Helical" evidence="1">
    <location>
        <begin position="16"/>
        <end position="36"/>
    </location>
</feature>
<feature type="topological domain" description="Extracellular" evidence="1">
    <location>
        <begin position="37"/>
        <end position="76"/>
    </location>
</feature>
<feature type="transmembrane region" description="Helical" evidence="1">
    <location>
        <begin position="77"/>
        <end position="97"/>
    </location>
</feature>
<feature type="topological domain" description="Cytoplasmic" evidence="1">
    <location>
        <begin position="98"/>
        <end position="119"/>
    </location>
</feature>
<feature type="transmembrane region" description="Helical" evidence="1">
    <location>
        <begin position="120"/>
        <end position="140"/>
    </location>
</feature>
<feature type="topological domain" description="Extracellular" evidence="1">
    <location>
        <begin position="141"/>
        <end position="170"/>
    </location>
</feature>
<keyword id="KW-0472">Membrane</keyword>
<keyword id="KW-0812">Transmembrane</keyword>
<keyword id="KW-1133">Transmembrane helix</keyword>
<accession>P46991</accession>